<keyword id="KW-0143">Chaperone</keyword>
<keyword id="KW-0963">Cytoplasm</keyword>
<evidence type="ECO:0000255" key="1">
    <source>
        <dbReference type="HAMAP-Rule" id="MF_00580"/>
    </source>
</evidence>
<proteinExistence type="inferred from homology"/>
<protein>
    <recommendedName>
        <fullName evidence="1">Co-chaperonin GroES</fullName>
    </recommendedName>
    <alternativeName>
        <fullName evidence="1">10 kDa chaperonin</fullName>
    </alternativeName>
    <alternativeName>
        <fullName evidence="1">Chaperonin-10</fullName>
        <shortName evidence="1">Cpn10</shortName>
    </alternativeName>
</protein>
<accession>Q73I70</accession>
<feature type="chain" id="PRO_0000174901" description="Co-chaperonin GroES">
    <location>
        <begin position="1"/>
        <end position="96"/>
    </location>
</feature>
<comment type="function">
    <text evidence="1">Together with the chaperonin GroEL, plays an essential role in assisting protein folding. The GroEL-GroES system forms a nano-cage that allows encapsulation of the non-native substrate proteins and provides a physical environment optimized to promote and accelerate protein folding. GroES binds to the apical surface of the GroEL ring, thereby capping the opening of the GroEL channel.</text>
</comment>
<comment type="subunit">
    <text evidence="1">Heptamer of 7 subunits arranged in a ring. Interacts with the chaperonin GroEL.</text>
</comment>
<comment type="subcellular location">
    <subcellularLocation>
        <location evidence="1">Cytoplasm</location>
    </subcellularLocation>
</comment>
<comment type="similarity">
    <text evidence="1">Belongs to the GroES chaperonin family.</text>
</comment>
<name>CH10_WOLPM</name>
<sequence length="96" mass="10410">MSSISLNVLDDSVLIKPISEEKQGGIVLPSSAEKKPTKGEVIAIGEGSRNSSGERVTLTVKAGDKVFYRQWAGTEIEHNNEKLIVMKESDILAVIK</sequence>
<organism>
    <name type="scientific">Wolbachia pipientis wMel</name>
    <dbReference type="NCBI Taxonomy" id="163164"/>
    <lineage>
        <taxon>Bacteria</taxon>
        <taxon>Pseudomonadati</taxon>
        <taxon>Pseudomonadota</taxon>
        <taxon>Alphaproteobacteria</taxon>
        <taxon>Rickettsiales</taxon>
        <taxon>Anaplasmataceae</taxon>
        <taxon>Wolbachieae</taxon>
        <taxon>Wolbachia</taxon>
    </lineage>
</organism>
<reference key="1">
    <citation type="journal article" date="2004" name="PLoS Biol.">
        <title>Phylogenomics of the reproductive parasite Wolbachia pipientis wMel: a streamlined genome overrun by mobile genetic elements.</title>
        <authorList>
            <person name="Wu M."/>
            <person name="Sun L.V."/>
            <person name="Vamathevan J.J."/>
            <person name="Riegler M."/>
            <person name="DeBoy R.T."/>
            <person name="Brownlie J.C."/>
            <person name="McGraw E.A."/>
            <person name="Martin W."/>
            <person name="Esser C."/>
            <person name="Ahmadinejad N."/>
            <person name="Wiegand C."/>
            <person name="Madupu R."/>
            <person name="Beanan M.J."/>
            <person name="Brinkac L.M."/>
            <person name="Daugherty S.C."/>
            <person name="Durkin A.S."/>
            <person name="Kolonay J.F."/>
            <person name="Nelson W.C."/>
            <person name="Mohamoud Y."/>
            <person name="Lee P."/>
            <person name="Berry K.J."/>
            <person name="Young M.B."/>
            <person name="Utterback T.R."/>
            <person name="Weidman J.F."/>
            <person name="Nierman W.C."/>
            <person name="Paulsen I.T."/>
            <person name="Nelson K.E."/>
            <person name="Tettelin H."/>
            <person name="O'Neill S.L."/>
            <person name="Eisen J.A."/>
        </authorList>
    </citation>
    <scope>NUCLEOTIDE SEQUENCE [LARGE SCALE GENOMIC DNA]</scope>
</reference>
<gene>
    <name evidence="1" type="primary">groES</name>
    <name evidence="1" type="synonym">groS</name>
    <name type="ordered locus">WD_0308</name>
</gene>
<dbReference type="EMBL" id="AE017196">
    <property type="protein sequence ID" value="AAS14042.1"/>
    <property type="molecule type" value="Genomic_DNA"/>
</dbReference>
<dbReference type="SMR" id="Q73I70"/>
<dbReference type="EnsemblBacteria" id="AAS14042">
    <property type="protein sequence ID" value="AAS14042"/>
    <property type="gene ID" value="WD_0308"/>
</dbReference>
<dbReference type="KEGG" id="wol:WD_0308"/>
<dbReference type="eggNOG" id="COG0234">
    <property type="taxonomic scope" value="Bacteria"/>
</dbReference>
<dbReference type="Proteomes" id="UP000008215">
    <property type="component" value="Chromosome"/>
</dbReference>
<dbReference type="GO" id="GO:0005737">
    <property type="term" value="C:cytoplasm"/>
    <property type="evidence" value="ECO:0007669"/>
    <property type="project" value="UniProtKB-SubCell"/>
</dbReference>
<dbReference type="GO" id="GO:0005524">
    <property type="term" value="F:ATP binding"/>
    <property type="evidence" value="ECO:0007669"/>
    <property type="project" value="InterPro"/>
</dbReference>
<dbReference type="GO" id="GO:0046872">
    <property type="term" value="F:metal ion binding"/>
    <property type="evidence" value="ECO:0007669"/>
    <property type="project" value="TreeGrafter"/>
</dbReference>
<dbReference type="GO" id="GO:0044183">
    <property type="term" value="F:protein folding chaperone"/>
    <property type="evidence" value="ECO:0007669"/>
    <property type="project" value="InterPro"/>
</dbReference>
<dbReference type="GO" id="GO:0051087">
    <property type="term" value="F:protein-folding chaperone binding"/>
    <property type="evidence" value="ECO:0007669"/>
    <property type="project" value="TreeGrafter"/>
</dbReference>
<dbReference type="GO" id="GO:0051082">
    <property type="term" value="F:unfolded protein binding"/>
    <property type="evidence" value="ECO:0007669"/>
    <property type="project" value="TreeGrafter"/>
</dbReference>
<dbReference type="GO" id="GO:0051085">
    <property type="term" value="P:chaperone cofactor-dependent protein refolding"/>
    <property type="evidence" value="ECO:0007669"/>
    <property type="project" value="TreeGrafter"/>
</dbReference>
<dbReference type="CDD" id="cd00320">
    <property type="entry name" value="cpn10"/>
    <property type="match status" value="1"/>
</dbReference>
<dbReference type="FunFam" id="2.30.33.40:FF:000001">
    <property type="entry name" value="10 kDa chaperonin"/>
    <property type="match status" value="1"/>
</dbReference>
<dbReference type="Gene3D" id="2.30.33.40">
    <property type="entry name" value="GroES chaperonin"/>
    <property type="match status" value="1"/>
</dbReference>
<dbReference type="HAMAP" id="MF_00580">
    <property type="entry name" value="CH10"/>
    <property type="match status" value="1"/>
</dbReference>
<dbReference type="InterPro" id="IPR020818">
    <property type="entry name" value="Chaperonin_GroES"/>
</dbReference>
<dbReference type="InterPro" id="IPR037124">
    <property type="entry name" value="Chaperonin_GroES_sf"/>
</dbReference>
<dbReference type="InterPro" id="IPR011032">
    <property type="entry name" value="GroES-like_sf"/>
</dbReference>
<dbReference type="NCBIfam" id="NF001533">
    <property type="entry name" value="PRK00364.2-4"/>
    <property type="match status" value="1"/>
</dbReference>
<dbReference type="PANTHER" id="PTHR10772">
    <property type="entry name" value="10 KDA HEAT SHOCK PROTEIN"/>
    <property type="match status" value="1"/>
</dbReference>
<dbReference type="PANTHER" id="PTHR10772:SF63">
    <property type="entry name" value="20 KDA CHAPERONIN, CHLOROPLASTIC"/>
    <property type="match status" value="1"/>
</dbReference>
<dbReference type="Pfam" id="PF00166">
    <property type="entry name" value="Cpn10"/>
    <property type="match status" value="1"/>
</dbReference>
<dbReference type="PRINTS" id="PR00297">
    <property type="entry name" value="CHAPERONIN10"/>
</dbReference>
<dbReference type="SMART" id="SM00883">
    <property type="entry name" value="Cpn10"/>
    <property type="match status" value="1"/>
</dbReference>
<dbReference type="SUPFAM" id="SSF50129">
    <property type="entry name" value="GroES-like"/>
    <property type="match status" value="1"/>
</dbReference>